<name>HYD2_FLAVE</name>
<dbReference type="EMBL" id="KT868834">
    <property type="protein sequence ID" value="AOV80982.1"/>
    <property type="molecule type" value="Genomic_DNA"/>
</dbReference>
<dbReference type="SMR" id="A0A1I9QLC3"/>
<dbReference type="GO" id="GO:0005576">
    <property type="term" value="C:extracellular region"/>
    <property type="evidence" value="ECO:0007669"/>
    <property type="project" value="UniProtKB-KW"/>
</dbReference>
<dbReference type="GO" id="GO:0009277">
    <property type="term" value="C:fungal-type cell wall"/>
    <property type="evidence" value="ECO:0007669"/>
    <property type="project" value="InterPro"/>
</dbReference>
<dbReference type="GO" id="GO:0005199">
    <property type="term" value="F:structural constituent of cell wall"/>
    <property type="evidence" value="ECO:0007669"/>
    <property type="project" value="InterPro"/>
</dbReference>
<dbReference type="CDD" id="cd23507">
    <property type="entry name" value="hydrophobin_I"/>
    <property type="match status" value="1"/>
</dbReference>
<dbReference type="InterPro" id="IPR001338">
    <property type="entry name" value="Hydrophobin"/>
</dbReference>
<dbReference type="Pfam" id="PF01185">
    <property type="entry name" value="Hydrophobin"/>
    <property type="match status" value="1"/>
</dbReference>
<dbReference type="SMART" id="SM00075">
    <property type="entry name" value="HYDRO"/>
    <property type="match status" value="1"/>
</dbReference>
<feature type="signal peptide" evidence="2">
    <location>
        <begin position="1"/>
        <end position="20"/>
    </location>
</feature>
<feature type="chain" id="PRO_5013985551" description="Class I hydrophobin 2">
    <location>
        <begin position="21"/>
        <end position="105"/>
    </location>
</feature>
<feature type="glycosylation site" description="N-linked (GlcNAc...) asparagine" evidence="3">
    <location>
        <position position="89"/>
    </location>
</feature>
<feature type="disulfide bond" evidence="1">
    <location>
        <begin position="26"/>
        <end position="86"/>
    </location>
</feature>
<feature type="disulfide bond" evidence="1">
    <location>
        <begin position="33"/>
        <end position="80"/>
    </location>
</feature>
<feature type="disulfide bond" evidence="1">
    <location>
        <begin position="34"/>
        <end position="67"/>
    </location>
</feature>
<feature type="disulfide bond" evidence="1">
    <location>
        <begin position="87"/>
        <end position="100"/>
    </location>
</feature>
<gene>
    <name evidence="5" type="primary">Hyd-2</name>
</gene>
<sequence>MFARCAATILALALATLTAATPTGQCNVGNQQCCNTVQEASSDPAAGLLALLGVNVQDVTGLVGLTCNPITAIGGLNSNCDASPVCCENNSFGSLISIGCVPISL</sequence>
<comment type="function">
    <text evidence="6">Aerial growth, conidiation, and dispersal of filamentous fungi in the environment rely upon a capability of their secreting small amphipathic proteins called hydrophobins (HPBs) with low sequence identity. Class I can self-assemble into an outermost layer of rodlet bundles on aerial cell surfaces, conferring cellular hydrophobicity that supports fungal growth, development and dispersal; whereas Class II form highly ordered films at water-air interfaces through intermolecular interactions but contribute nothing to the rodlet structure.</text>
</comment>
<comment type="subunit">
    <text evidence="1">Self-assembles to form functional amyloid fibrils called rodlets. Self-assembly into fibrillar rodlets occurs spontaneously at hydrophobic:hydrophilic interfaces and the rodlets further associate laterally to form amphipathic monolayers.</text>
</comment>
<comment type="subcellular location">
    <subcellularLocation>
        <location evidence="1">Secreted</location>
    </subcellularLocation>
    <subcellularLocation>
        <location evidence="1">Secreted</location>
        <location evidence="1">Cell wall</location>
    </subcellularLocation>
</comment>
<comment type="developmental stage">
    <text evidence="4">Shows relatively higher levels of expression in the primordial stages and relatively low levels in the mycelial stage.</text>
</comment>
<comment type="induction">
    <text evidence="4">A CT-rich motif, which is often found immediately upstream of the transcription start point of highly expressed filamentous fungal genes, is present at the expected position (Ref.1). Two additional CT-rich regions are also found upstream of the TATA box in the promoter region (Ref.1).</text>
</comment>
<comment type="similarity">
    <text evidence="6">Belongs to the fungal hydrophobin family.</text>
</comment>
<organism>
    <name type="scientific">Flammulina velutipes</name>
    <name type="common">Agaricus velutipes</name>
    <dbReference type="NCBI Taxonomy" id="38945"/>
    <lineage>
        <taxon>Eukaryota</taxon>
        <taxon>Fungi</taxon>
        <taxon>Dikarya</taxon>
        <taxon>Basidiomycota</taxon>
        <taxon>Agaricomycotina</taxon>
        <taxon>Agaricomycetes</taxon>
        <taxon>Agaricomycetidae</taxon>
        <taxon>Agaricales</taxon>
        <taxon>Marasmiineae</taxon>
        <taxon>Physalacriaceae</taxon>
        <taxon>Flammulina</taxon>
    </lineage>
</organism>
<accession>A0A1I9QLC3</accession>
<protein>
    <recommendedName>
        <fullName evidence="5">Class I hydrophobin 2</fullName>
    </recommendedName>
</protein>
<keyword id="KW-0134">Cell wall</keyword>
<keyword id="KW-1015">Disulfide bond</keyword>
<keyword id="KW-0325">Glycoprotein</keyword>
<keyword id="KW-0964">Secreted</keyword>
<keyword id="KW-0732">Signal</keyword>
<evidence type="ECO:0000250" key="1">
    <source>
        <dbReference type="UniProtKB" id="Q04571"/>
    </source>
</evidence>
<evidence type="ECO:0000255" key="2"/>
<evidence type="ECO:0000255" key="3">
    <source>
        <dbReference type="PROSITE-ProRule" id="PRU00498"/>
    </source>
</evidence>
<evidence type="ECO:0000269" key="4">
    <source ref="1"/>
</evidence>
<evidence type="ECO:0000303" key="5">
    <source ref="1"/>
</evidence>
<evidence type="ECO:0000305" key="6"/>
<reference key="1">
    <citation type="journal article" date="2016" name="Mycoscience">
        <title>Further characterization of hydrophobin genes in genome of Flammulina velutipes.</title>
        <authorList>
            <person name="Kim H.-I."/>
            <person name="Lee C.-S."/>
            <person name="Park Y.-J."/>
        </authorList>
    </citation>
    <scope>NUCLEOTIDE SEQUENCE [GENOMIC DNA]</scope>
    <scope>DEVELOPMENTAL STAGE</scope>
    <scope>INDUCTION</scope>
</reference>
<proteinExistence type="evidence at transcript level"/>